<gene>
    <name evidence="1" type="primary">secE</name>
    <name type="ordered locus">MA_4272</name>
</gene>
<name>SECE_METAC</name>
<comment type="function">
    <text evidence="1">Essential subunit of the Sec protein translocation channel SecYEG. Clamps together the 2 halves of SecY. May contact the channel plug during translocation.</text>
</comment>
<comment type="subunit">
    <text evidence="1">Component of the Sec protein translocase complex. Heterotrimer consisting of SecY (alpha), SecG (beta) and SecE (gamma) subunits. The heterotrimers can form oligomers, although 1 heterotrimer is thought to be able to translocate proteins. Interacts with the ribosome. May interact with SecDF, and other proteins may be involved.</text>
</comment>
<comment type="subcellular location">
    <subcellularLocation>
        <location evidence="1">Cell membrane</location>
        <topology evidence="1">Single-pass membrane protein</topology>
    </subcellularLocation>
</comment>
<comment type="similarity">
    <text evidence="1">Belongs to the SecE/SEC61-gamma family.</text>
</comment>
<dbReference type="EMBL" id="AE010299">
    <property type="protein sequence ID" value="AAM07616.1"/>
    <property type="molecule type" value="Genomic_DNA"/>
</dbReference>
<dbReference type="RefSeq" id="WP_011024153.1">
    <property type="nucleotide sequence ID" value="NC_003552.1"/>
</dbReference>
<dbReference type="SMR" id="Q8TI84"/>
<dbReference type="FunCoup" id="Q8TI84">
    <property type="interactions" value="27"/>
</dbReference>
<dbReference type="STRING" id="188937.MA_4272"/>
<dbReference type="EnsemblBacteria" id="AAM07616">
    <property type="protein sequence ID" value="AAM07616"/>
    <property type="gene ID" value="MA_4272"/>
</dbReference>
<dbReference type="GeneID" id="1476166"/>
<dbReference type="KEGG" id="mac:MA_4272"/>
<dbReference type="HOGENOM" id="CLU_191921_2_1_2"/>
<dbReference type="InParanoid" id="Q8TI84"/>
<dbReference type="OrthoDB" id="52835at2157"/>
<dbReference type="Proteomes" id="UP000002487">
    <property type="component" value="Chromosome"/>
</dbReference>
<dbReference type="GO" id="GO:0005886">
    <property type="term" value="C:plasma membrane"/>
    <property type="evidence" value="ECO:0007669"/>
    <property type="project" value="UniProtKB-SubCell"/>
</dbReference>
<dbReference type="GO" id="GO:0008320">
    <property type="term" value="F:protein transmembrane transporter activity"/>
    <property type="evidence" value="ECO:0007669"/>
    <property type="project" value="UniProtKB-UniRule"/>
</dbReference>
<dbReference type="GO" id="GO:0065002">
    <property type="term" value="P:intracellular protein transmembrane transport"/>
    <property type="evidence" value="ECO:0007669"/>
    <property type="project" value="UniProtKB-UniRule"/>
</dbReference>
<dbReference type="GO" id="GO:0009306">
    <property type="term" value="P:protein secretion"/>
    <property type="evidence" value="ECO:0007669"/>
    <property type="project" value="UniProtKB-UniRule"/>
</dbReference>
<dbReference type="GO" id="GO:0006605">
    <property type="term" value="P:protein targeting"/>
    <property type="evidence" value="ECO:0007669"/>
    <property type="project" value="UniProtKB-UniRule"/>
</dbReference>
<dbReference type="Gene3D" id="1.20.5.820">
    <property type="entry name" value="Preprotein translocase SecE subunit"/>
    <property type="match status" value="1"/>
</dbReference>
<dbReference type="HAMAP" id="MF_00422">
    <property type="entry name" value="SecE"/>
    <property type="match status" value="1"/>
</dbReference>
<dbReference type="InterPro" id="IPR023391">
    <property type="entry name" value="Prot_translocase_SecE_dom_sf"/>
</dbReference>
<dbReference type="InterPro" id="IPR008158">
    <property type="entry name" value="Translocase_Sec61-g"/>
</dbReference>
<dbReference type="InterPro" id="IPR001901">
    <property type="entry name" value="Translocase_SecE/Sec61-g"/>
</dbReference>
<dbReference type="NCBIfam" id="NF006908">
    <property type="entry name" value="PRK09400.1-3"/>
    <property type="match status" value="1"/>
</dbReference>
<dbReference type="NCBIfam" id="TIGR00327">
    <property type="entry name" value="secE_euk_arch"/>
    <property type="match status" value="1"/>
</dbReference>
<dbReference type="Pfam" id="PF00584">
    <property type="entry name" value="SecE"/>
    <property type="match status" value="1"/>
</dbReference>
<dbReference type="SUPFAM" id="SSF103456">
    <property type="entry name" value="Preprotein translocase SecE subunit"/>
    <property type="match status" value="1"/>
</dbReference>
<proteinExistence type="inferred from homology"/>
<reference key="1">
    <citation type="journal article" date="2002" name="Genome Res.">
        <title>The genome of Methanosarcina acetivorans reveals extensive metabolic and physiological diversity.</title>
        <authorList>
            <person name="Galagan J.E."/>
            <person name="Nusbaum C."/>
            <person name="Roy A."/>
            <person name="Endrizzi M.G."/>
            <person name="Macdonald P."/>
            <person name="FitzHugh W."/>
            <person name="Calvo S."/>
            <person name="Engels R."/>
            <person name="Smirnov S."/>
            <person name="Atnoor D."/>
            <person name="Brown A."/>
            <person name="Allen N."/>
            <person name="Naylor J."/>
            <person name="Stange-Thomann N."/>
            <person name="DeArellano K."/>
            <person name="Johnson R."/>
            <person name="Linton L."/>
            <person name="McEwan P."/>
            <person name="McKernan K."/>
            <person name="Talamas J."/>
            <person name="Tirrell A."/>
            <person name="Ye W."/>
            <person name="Zimmer A."/>
            <person name="Barber R.D."/>
            <person name="Cann I."/>
            <person name="Graham D.E."/>
            <person name="Grahame D.A."/>
            <person name="Guss A.M."/>
            <person name="Hedderich R."/>
            <person name="Ingram-Smith C."/>
            <person name="Kuettner H.C."/>
            <person name="Krzycki J.A."/>
            <person name="Leigh J.A."/>
            <person name="Li W."/>
            <person name="Liu J."/>
            <person name="Mukhopadhyay B."/>
            <person name="Reeve J.N."/>
            <person name="Smith K."/>
            <person name="Springer T.A."/>
            <person name="Umayam L.A."/>
            <person name="White O."/>
            <person name="White R.H."/>
            <person name="de Macario E.C."/>
            <person name="Ferry J.G."/>
            <person name="Jarrell K.F."/>
            <person name="Jing H."/>
            <person name="Macario A.J.L."/>
            <person name="Paulsen I.T."/>
            <person name="Pritchett M."/>
            <person name="Sowers K.R."/>
            <person name="Swanson R.V."/>
            <person name="Zinder S.H."/>
            <person name="Lander E."/>
            <person name="Metcalf W.W."/>
            <person name="Birren B."/>
        </authorList>
    </citation>
    <scope>NUCLEOTIDE SEQUENCE [LARGE SCALE GENOMIC DNA]</scope>
    <source>
        <strain>ATCC 35395 / DSM 2834 / JCM 12185 / C2A</strain>
    </source>
</reference>
<protein>
    <recommendedName>
        <fullName evidence="1">Protein translocase subunit SecE</fullName>
    </recommendedName>
    <alternativeName>
        <fullName evidence="1">Protein transport protein Sec61 gamma subunit homolog</fullName>
    </alternativeName>
</protein>
<feature type="chain" id="PRO_0000104218" description="Protein translocase subunit SecE">
    <location>
        <begin position="1"/>
        <end position="71"/>
    </location>
</feature>
<feature type="transmembrane region" description="Helical" evidence="1">
    <location>
        <begin position="43"/>
        <end position="63"/>
    </location>
</feature>
<accession>Q8TI84</accession>
<organism>
    <name type="scientific">Methanosarcina acetivorans (strain ATCC 35395 / DSM 2834 / JCM 12185 / C2A)</name>
    <dbReference type="NCBI Taxonomy" id="188937"/>
    <lineage>
        <taxon>Archaea</taxon>
        <taxon>Methanobacteriati</taxon>
        <taxon>Methanobacteriota</taxon>
        <taxon>Stenosarchaea group</taxon>
        <taxon>Methanomicrobia</taxon>
        <taxon>Methanosarcinales</taxon>
        <taxon>Methanosarcinaceae</taxon>
        <taxon>Methanosarcina</taxon>
    </lineage>
</organism>
<keyword id="KW-1003">Cell membrane</keyword>
<keyword id="KW-0472">Membrane</keyword>
<keyword id="KW-0653">Protein transport</keyword>
<keyword id="KW-1185">Reference proteome</keyword>
<keyword id="KW-0811">Translocation</keyword>
<keyword id="KW-0812">Transmembrane</keyword>
<keyword id="KW-1133">Transmembrane helix</keyword>
<keyword id="KW-0813">Transport</keyword>
<evidence type="ECO:0000255" key="1">
    <source>
        <dbReference type="HAMAP-Rule" id="MF_00422"/>
    </source>
</evidence>
<sequence>MVESTFEPNITTKSVGQAIRAHLRVLKLTKKPSREEFLTIAKVAGAGILAVGAIGFIIYVLLTMLPQWVSQ</sequence>